<protein>
    <recommendedName>
        <fullName evidence="1">Ferredoxin--NADP reductase</fullName>
        <shortName evidence="1">FNR</shortName>
        <shortName evidence="1">Fd-NADP(+) reductase</shortName>
        <ecNumber evidence="1">1.18.1.2</ecNumber>
    </recommendedName>
</protein>
<proteinExistence type="inferred from homology"/>
<accession>Q2GCZ2</accession>
<name>FENR_NEOSM</name>
<comment type="catalytic activity">
    <reaction evidence="1">
        <text>2 reduced [2Fe-2S]-[ferredoxin] + NADP(+) + H(+) = 2 oxidized [2Fe-2S]-[ferredoxin] + NADPH</text>
        <dbReference type="Rhea" id="RHEA:20125"/>
        <dbReference type="Rhea" id="RHEA-COMP:10000"/>
        <dbReference type="Rhea" id="RHEA-COMP:10001"/>
        <dbReference type="ChEBI" id="CHEBI:15378"/>
        <dbReference type="ChEBI" id="CHEBI:33737"/>
        <dbReference type="ChEBI" id="CHEBI:33738"/>
        <dbReference type="ChEBI" id="CHEBI:57783"/>
        <dbReference type="ChEBI" id="CHEBI:58349"/>
        <dbReference type="EC" id="1.18.1.2"/>
    </reaction>
</comment>
<comment type="cofactor">
    <cofactor evidence="1">
        <name>FAD</name>
        <dbReference type="ChEBI" id="CHEBI:57692"/>
    </cofactor>
    <text evidence="1">Binds 1 FAD per subunit.</text>
</comment>
<comment type="subunit">
    <text evidence="1">Homodimer.</text>
</comment>
<comment type="similarity">
    <text evidence="1">Belongs to the ferredoxin--NADP reductase type 2 family.</text>
</comment>
<gene>
    <name type="ordered locus">NSE_0779</name>
</gene>
<sequence length="333" mass="36517">MNTDVIIIGAGPVGIFTAFQAGMLGMRAHVIDSLLSIGGQCTALYPEKFIYDIPGYKQITAAALISNLAEQAERFNPTYHTDQFATHMDRLDTSFVVKTSKEIEITAKAVIIAAGAGAFDYNRIPIESSHVYEGKSLFYSVKDPSIFTSKVVVIAGGGDSAADWGLILSKLARKVYLIHRRSKFRCSDSTFKDLKSLEETKKLKILTPYQITGLRGSGGQISHIELGGLTGESVTLEADYLLAFFGLKPSLRHLEEWGIEITHNCINVDPLTCSTNIKGVYAVGDVAHYDSKLKLILSGFSEAATACHHIRETIIGGDVYNFRYSTNMNEVFR</sequence>
<evidence type="ECO:0000255" key="1">
    <source>
        <dbReference type="HAMAP-Rule" id="MF_01685"/>
    </source>
</evidence>
<reference key="1">
    <citation type="journal article" date="2006" name="PLoS Genet.">
        <title>Comparative genomics of emerging human ehrlichiosis agents.</title>
        <authorList>
            <person name="Dunning Hotopp J.C."/>
            <person name="Lin M."/>
            <person name="Madupu R."/>
            <person name="Crabtree J."/>
            <person name="Angiuoli S.V."/>
            <person name="Eisen J.A."/>
            <person name="Seshadri R."/>
            <person name="Ren Q."/>
            <person name="Wu M."/>
            <person name="Utterback T.R."/>
            <person name="Smith S."/>
            <person name="Lewis M."/>
            <person name="Khouri H."/>
            <person name="Zhang C."/>
            <person name="Niu H."/>
            <person name="Lin Q."/>
            <person name="Ohashi N."/>
            <person name="Zhi N."/>
            <person name="Nelson W.C."/>
            <person name="Brinkac L.M."/>
            <person name="Dodson R.J."/>
            <person name="Rosovitz M.J."/>
            <person name="Sundaram J.P."/>
            <person name="Daugherty S.C."/>
            <person name="Davidsen T."/>
            <person name="Durkin A.S."/>
            <person name="Gwinn M.L."/>
            <person name="Haft D.H."/>
            <person name="Selengut J.D."/>
            <person name="Sullivan S.A."/>
            <person name="Zafar N."/>
            <person name="Zhou L."/>
            <person name="Benahmed F."/>
            <person name="Forberger H."/>
            <person name="Halpin R."/>
            <person name="Mulligan S."/>
            <person name="Robinson J."/>
            <person name="White O."/>
            <person name="Rikihisa Y."/>
            <person name="Tettelin H."/>
        </authorList>
    </citation>
    <scope>NUCLEOTIDE SEQUENCE [LARGE SCALE GENOMIC DNA]</scope>
    <source>
        <strain>ATCC VR-367 / Miyayama</strain>
    </source>
</reference>
<keyword id="KW-0274">FAD</keyword>
<keyword id="KW-0285">Flavoprotein</keyword>
<keyword id="KW-0521">NADP</keyword>
<keyword id="KW-0560">Oxidoreductase</keyword>
<dbReference type="EC" id="1.18.1.2" evidence="1"/>
<dbReference type="EMBL" id="CP000237">
    <property type="protein sequence ID" value="ABD46109.1"/>
    <property type="molecule type" value="Genomic_DNA"/>
</dbReference>
<dbReference type="RefSeq" id="WP_011452160.1">
    <property type="nucleotide sequence ID" value="NC_007798.1"/>
</dbReference>
<dbReference type="SMR" id="Q2GCZ2"/>
<dbReference type="STRING" id="222891.NSE_0779"/>
<dbReference type="KEGG" id="nse:NSE_0779"/>
<dbReference type="eggNOG" id="COG0492">
    <property type="taxonomic scope" value="Bacteria"/>
</dbReference>
<dbReference type="HOGENOM" id="CLU_031864_5_5_5"/>
<dbReference type="OrthoDB" id="9806179at2"/>
<dbReference type="Proteomes" id="UP000001942">
    <property type="component" value="Chromosome"/>
</dbReference>
<dbReference type="GO" id="GO:0004324">
    <property type="term" value="F:ferredoxin-NADP+ reductase activity"/>
    <property type="evidence" value="ECO:0007669"/>
    <property type="project" value="UniProtKB-UniRule"/>
</dbReference>
<dbReference type="GO" id="GO:0050660">
    <property type="term" value="F:flavin adenine dinucleotide binding"/>
    <property type="evidence" value="ECO:0007669"/>
    <property type="project" value="UniProtKB-UniRule"/>
</dbReference>
<dbReference type="GO" id="GO:0050661">
    <property type="term" value="F:NADP binding"/>
    <property type="evidence" value="ECO:0007669"/>
    <property type="project" value="UniProtKB-UniRule"/>
</dbReference>
<dbReference type="Gene3D" id="3.50.50.60">
    <property type="entry name" value="FAD/NAD(P)-binding domain"/>
    <property type="match status" value="2"/>
</dbReference>
<dbReference type="HAMAP" id="MF_01685">
    <property type="entry name" value="FENR2"/>
    <property type="match status" value="1"/>
</dbReference>
<dbReference type="InterPro" id="IPR036188">
    <property type="entry name" value="FAD/NAD-bd_sf"/>
</dbReference>
<dbReference type="InterPro" id="IPR023753">
    <property type="entry name" value="FAD/NAD-binding_dom"/>
</dbReference>
<dbReference type="InterPro" id="IPR022890">
    <property type="entry name" value="Fd--NADP_Rdtase_type_2"/>
</dbReference>
<dbReference type="InterPro" id="IPR050097">
    <property type="entry name" value="Ferredoxin-NADP_redctase_2"/>
</dbReference>
<dbReference type="PANTHER" id="PTHR48105">
    <property type="entry name" value="THIOREDOXIN REDUCTASE 1-RELATED-RELATED"/>
    <property type="match status" value="1"/>
</dbReference>
<dbReference type="Pfam" id="PF07992">
    <property type="entry name" value="Pyr_redox_2"/>
    <property type="match status" value="1"/>
</dbReference>
<dbReference type="PRINTS" id="PR00368">
    <property type="entry name" value="FADPNR"/>
</dbReference>
<dbReference type="PRINTS" id="PR00469">
    <property type="entry name" value="PNDRDTASEII"/>
</dbReference>
<dbReference type="SUPFAM" id="SSF51905">
    <property type="entry name" value="FAD/NAD(P)-binding domain"/>
    <property type="match status" value="1"/>
</dbReference>
<organism>
    <name type="scientific">Neorickettsia sennetsu (strain ATCC VR-367 / Miyayama)</name>
    <name type="common">Ehrlichia sennetsu</name>
    <dbReference type="NCBI Taxonomy" id="222891"/>
    <lineage>
        <taxon>Bacteria</taxon>
        <taxon>Pseudomonadati</taxon>
        <taxon>Pseudomonadota</taxon>
        <taxon>Alphaproteobacteria</taxon>
        <taxon>Rickettsiales</taxon>
        <taxon>Anaplasmataceae</taxon>
        <taxon>Neorickettsia</taxon>
    </lineage>
</organism>
<feature type="chain" id="PRO_0000364884" description="Ferredoxin--NADP reductase">
    <location>
        <begin position="1"/>
        <end position="333"/>
    </location>
</feature>
<feature type="binding site" evidence="1">
    <location>
        <position position="32"/>
    </location>
    <ligand>
        <name>FAD</name>
        <dbReference type="ChEBI" id="CHEBI:57692"/>
    </ligand>
</feature>
<feature type="binding site" evidence="1">
    <location>
        <position position="40"/>
    </location>
    <ligand>
        <name>FAD</name>
        <dbReference type="ChEBI" id="CHEBI:57692"/>
    </ligand>
</feature>
<feature type="binding site" evidence="1">
    <location>
        <position position="45"/>
    </location>
    <ligand>
        <name>FAD</name>
        <dbReference type="ChEBI" id="CHEBI:57692"/>
    </ligand>
</feature>
<feature type="binding site" evidence="1">
    <location>
        <position position="85"/>
    </location>
    <ligand>
        <name>FAD</name>
        <dbReference type="ChEBI" id="CHEBI:57692"/>
    </ligand>
</feature>
<feature type="binding site" evidence="1">
    <location>
        <position position="119"/>
    </location>
    <ligand>
        <name>FAD</name>
        <dbReference type="ChEBI" id="CHEBI:57692"/>
    </ligand>
</feature>
<feature type="binding site" evidence="1">
    <location>
        <position position="285"/>
    </location>
    <ligand>
        <name>FAD</name>
        <dbReference type="ChEBI" id="CHEBI:57692"/>
    </ligand>
</feature>
<feature type="binding site" evidence="1">
    <location>
        <position position="326"/>
    </location>
    <ligand>
        <name>FAD</name>
        <dbReference type="ChEBI" id="CHEBI:57692"/>
    </ligand>
</feature>